<feature type="chain" id="PRO_0000341686" description="Conserved oligomeric Golgi complex subunit 8">
    <location>
        <begin position="1"/>
        <end position="626"/>
    </location>
</feature>
<feature type="region of interest" description="Disordered" evidence="2">
    <location>
        <begin position="580"/>
        <end position="626"/>
    </location>
</feature>
<feature type="compositionally biased region" description="Pro residues" evidence="2">
    <location>
        <begin position="580"/>
        <end position="598"/>
    </location>
</feature>
<protein>
    <recommendedName>
        <fullName>Conserved oligomeric Golgi complex subunit 8</fullName>
        <shortName>COG complex subunit 8</shortName>
    </recommendedName>
    <alternativeName>
        <fullName>Component of oligomeric Golgi complex 8</fullName>
    </alternativeName>
</protein>
<sequence>MAATATIPSSTTASATTTATAAALGEVEDEGLLASLFRDRFPEAQWRERPDVGRYLRELSGSGLERLRREPERLAEERAQLLQQTRDLAFANYKTFIRGAECTERIHRLFGDVEESLGRLLDRLPSLQQSCRNFVKEAEEISSNRRMNTLTLNRHTEILEILEIPQLMDTCVRNSYYEEALELAAYVRRLERKYSSIPVIQGIVNEVRQSMQLMLSQLIQQLRTNIQLPACLRVIGFLRQMDVFTEAELRVKFLQARDAWLRSILTAIPNDDPYFHITKTIEACRVHLFDIITQYRAIFSDEDPLLPPAMGEHMVNESAIFHGWVLQKVSQFLQVLETDLNRGIGSRLDSLLGQCMYFGLSFSRVGADFRGQLVPVFQQVAISTFQKAIQEAVEKFQDEMNSYTLISTPAVLGSSALPAAAPVTQPGTLQPPMVLLDFPPLACFLNSILVAFNDLRLCCPVALAQEVTRALEDALDKVTKVILAFHRAEEAAFSSGEQELFVQFCTVFLEDLVPYLNRCLQVLFPPAQIAQTLGIPPTQLSKYGNLGHVNVSVVQEPLAFILPKREPVFCLDKELVPELPAPAPALPPNAPSPEPVTPVTPAVPDAGQEEVESAGPPQPDEPSAGI</sequence>
<evidence type="ECO:0000250" key="1"/>
<evidence type="ECO:0000256" key="2">
    <source>
        <dbReference type="SAM" id="MobiDB-lite"/>
    </source>
</evidence>
<evidence type="ECO:0000305" key="3"/>
<name>COG8_BOVIN</name>
<gene>
    <name type="primary">COG8</name>
</gene>
<accession>Q2TBH9</accession>
<organism>
    <name type="scientific">Bos taurus</name>
    <name type="common">Bovine</name>
    <dbReference type="NCBI Taxonomy" id="9913"/>
    <lineage>
        <taxon>Eukaryota</taxon>
        <taxon>Metazoa</taxon>
        <taxon>Chordata</taxon>
        <taxon>Craniata</taxon>
        <taxon>Vertebrata</taxon>
        <taxon>Euteleostomi</taxon>
        <taxon>Mammalia</taxon>
        <taxon>Eutheria</taxon>
        <taxon>Laurasiatheria</taxon>
        <taxon>Artiodactyla</taxon>
        <taxon>Ruminantia</taxon>
        <taxon>Pecora</taxon>
        <taxon>Bovidae</taxon>
        <taxon>Bovinae</taxon>
        <taxon>Bos</taxon>
    </lineage>
</organism>
<keyword id="KW-0333">Golgi apparatus</keyword>
<keyword id="KW-0472">Membrane</keyword>
<keyword id="KW-0653">Protein transport</keyword>
<keyword id="KW-1185">Reference proteome</keyword>
<keyword id="KW-0813">Transport</keyword>
<comment type="function">
    <text evidence="1">Required for normal Golgi function.</text>
</comment>
<comment type="subunit">
    <text evidence="1">Component of the conserved oligomeric Golgi complex which is composed of eight different subunits and is required for normal Golgi morphology and localization.</text>
</comment>
<comment type="subcellular location">
    <subcellularLocation>
        <location evidence="1">Golgi apparatus membrane</location>
        <topology evidence="1">Peripheral membrane protein</topology>
    </subcellularLocation>
</comment>
<comment type="similarity">
    <text evidence="3">Belongs to the COG8 family.</text>
</comment>
<reference key="1">
    <citation type="submission" date="2005-11" db="EMBL/GenBank/DDBJ databases">
        <authorList>
            <consortium name="NIH - Mammalian Gene Collection (MGC) project"/>
        </authorList>
    </citation>
    <scope>NUCLEOTIDE SEQUENCE [LARGE SCALE MRNA]</scope>
    <source>
        <strain>Crossbred X Angus</strain>
        <tissue>Liver</tissue>
    </source>
</reference>
<proteinExistence type="evidence at transcript level"/>
<dbReference type="EMBL" id="BC110177">
    <property type="protein sequence ID" value="AAI10178.1"/>
    <property type="molecule type" value="mRNA"/>
</dbReference>
<dbReference type="RefSeq" id="NP_001070535.1">
    <property type="nucleotide sequence ID" value="NM_001077067.2"/>
</dbReference>
<dbReference type="SMR" id="Q2TBH9"/>
<dbReference type="CORUM" id="Q2TBH9"/>
<dbReference type="FunCoup" id="Q2TBH9">
    <property type="interactions" value="4128"/>
</dbReference>
<dbReference type="STRING" id="9913.ENSBTAP00000002179"/>
<dbReference type="PaxDb" id="9913-ENSBTAP00000002179"/>
<dbReference type="GeneID" id="768007"/>
<dbReference type="KEGG" id="bta:768007"/>
<dbReference type="CTD" id="84342"/>
<dbReference type="eggNOG" id="KOG2069">
    <property type="taxonomic scope" value="Eukaryota"/>
</dbReference>
<dbReference type="InParanoid" id="Q2TBH9"/>
<dbReference type="OrthoDB" id="1661054at2759"/>
<dbReference type="Proteomes" id="UP000009136">
    <property type="component" value="Unplaced"/>
</dbReference>
<dbReference type="GO" id="GO:0000139">
    <property type="term" value="C:Golgi membrane"/>
    <property type="evidence" value="ECO:0007669"/>
    <property type="project" value="UniProtKB-SubCell"/>
</dbReference>
<dbReference type="GO" id="GO:0017119">
    <property type="term" value="C:Golgi transport complex"/>
    <property type="evidence" value="ECO:0000318"/>
    <property type="project" value="GO_Central"/>
</dbReference>
<dbReference type="GO" id="GO:0006891">
    <property type="term" value="P:intra-Golgi vesicle-mediated transport"/>
    <property type="evidence" value="ECO:0000318"/>
    <property type="project" value="GO_Central"/>
</dbReference>
<dbReference type="GO" id="GO:0015031">
    <property type="term" value="P:protein transport"/>
    <property type="evidence" value="ECO:0007669"/>
    <property type="project" value="UniProtKB-KW"/>
</dbReference>
<dbReference type="InterPro" id="IPR007255">
    <property type="entry name" value="COG8"/>
</dbReference>
<dbReference type="InterPro" id="IPR016632">
    <property type="entry name" value="COG8_Metazoal_Plant"/>
</dbReference>
<dbReference type="InterPro" id="IPR016159">
    <property type="entry name" value="Cullin_repeat-like_dom_sf"/>
</dbReference>
<dbReference type="PANTHER" id="PTHR21311">
    <property type="entry name" value="CONSERVED OLIGOMERIC GOLGI COMPLEX COMPONENT 8"/>
    <property type="match status" value="1"/>
</dbReference>
<dbReference type="PANTHER" id="PTHR21311:SF0">
    <property type="entry name" value="CONSERVED OLIGOMERIC GOLGI COMPLEX SUBUNIT 8"/>
    <property type="match status" value="1"/>
</dbReference>
<dbReference type="Pfam" id="PF04124">
    <property type="entry name" value="Dor1"/>
    <property type="match status" value="1"/>
</dbReference>
<dbReference type="PIRSF" id="PIRSF015415">
    <property type="entry name" value="COG8"/>
    <property type="match status" value="1"/>
</dbReference>
<dbReference type="SUPFAM" id="SSF74788">
    <property type="entry name" value="Cullin repeat-like"/>
    <property type="match status" value="1"/>
</dbReference>